<name>CAE41_RANCI</name>
<protein>
    <recommendedName>
        <fullName>Caerulein-4.1/4.1Y4</fullName>
    </recommendedName>
</protein>
<proteinExistence type="evidence at protein level"/>
<organism>
    <name type="scientific">Ranoidea citropa</name>
    <name type="common">Australian Blue Mountains tree frog</name>
    <name type="synonym">Litoria citropa</name>
    <dbReference type="NCBI Taxonomy" id="94770"/>
    <lineage>
        <taxon>Eukaryota</taxon>
        <taxon>Metazoa</taxon>
        <taxon>Chordata</taxon>
        <taxon>Craniata</taxon>
        <taxon>Vertebrata</taxon>
        <taxon>Euteleostomi</taxon>
        <taxon>Amphibia</taxon>
        <taxon>Batrachia</taxon>
        <taxon>Anura</taxon>
        <taxon>Neobatrachia</taxon>
        <taxon>Hyloidea</taxon>
        <taxon>Hylidae</taxon>
        <taxon>Pelodryadinae</taxon>
        <taxon>Ranoidea</taxon>
    </lineage>
</organism>
<feature type="peptide" id="PRO_0000043884" description="Caerulein-4.1/4.1Y4">
    <location>
        <begin position="1"/>
        <end position="11"/>
    </location>
</feature>
<feature type="modified residue" description="Pyrrolidone carboxylic acid" evidence="1">
    <location>
        <position position="1"/>
    </location>
</feature>
<feature type="modified residue" description="Sulfotyrosine" evidence="1">
    <location>
        <position position="4"/>
    </location>
</feature>
<feature type="modified residue" description="Phenylalanine amide" evidence="1">
    <location>
        <position position="11"/>
    </location>
</feature>
<comment type="function">
    <text evidence="2">Hypotensive neuropeptide.</text>
</comment>
<comment type="subcellular location">
    <subcellularLocation>
        <location>Secreted</location>
    </subcellularLocation>
</comment>
<comment type="tissue specificity">
    <text>Expressed by the skin dorsal glands.</text>
</comment>
<comment type="PTM">
    <text evidence="1">Isoform 4.1Y4 differs from isoform 4.1 in not being sulfated.</text>
</comment>
<comment type="mass spectrometry"/>
<comment type="similarity">
    <text evidence="2">Belongs to the gastrin/cholecystokinin family.</text>
</comment>
<accession>P82091</accession>
<reference key="1">
    <citation type="journal article" date="1999" name="Rapid Commun. Mass Spectrom.">
        <title>Caerulein-like peptides from the skin glands of the Australian blue mountains tree frog Litoria citropa. Part 1. Sequence determination using electrospray mass spectrometry.</title>
        <authorList>
            <person name="Wabnitz P.A."/>
            <person name="Bowie J.H."/>
            <person name="Tyler M.J."/>
        </authorList>
    </citation>
    <scope>PROTEIN SEQUENCE</scope>
    <scope>PYROGLUTAMATE FORMATION AT GLN-1</scope>
    <scope>SULFATION AT TYR-4</scope>
    <scope>AMIDATION AT PHE-11</scope>
    <scope>MASS SPECTROMETRY</scope>
    <source>
        <tissue>Skin secretion</tissue>
    </source>
</reference>
<evidence type="ECO:0000269" key="1">
    <source>
    </source>
</evidence>
<evidence type="ECO:0000305" key="2"/>
<keyword id="KW-0027">Amidation</keyword>
<keyword id="KW-0878">Amphibian defense peptide</keyword>
<keyword id="KW-0903">Direct protein sequencing</keyword>
<keyword id="KW-0382">Hypotensive agent</keyword>
<keyword id="KW-0873">Pyrrolidone carboxylic acid</keyword>
<keyword id="KW-0964">Secreted</keyword>
<keyword id="KW-0765">Sulfation</keyword>
<dbReference type="GO" id="GO:0005576">
    <property type="term" value="C:extracellular region"/>
    <property type="evidence" value="ECO:0007669"/>
    <property type="project" value="UniProtKB-SubCell"/>
</dbReference>
<dbReference type="GO" id="GO:0006952">
    <property type="term" value="P:defense response"/>
    <property type="evidence" value="ECO:0007669"/>
    <property type="project" value="UniProtKB-KW"/>
</dbReference>
<dbReference type="GO" id="GO:0008217">
    <property type="term" value="P:regulation of blood pressure"/>
    <property type="evidence" value="ECO:0007669"/>
    <property type="project" value="UniProtKB-KW"/>
</dbReference>
<sequence>QQDYTGSHMDF</sequence>